<keyword id="KW-0067">ATP-binding</keyword>
<keyword id="KW-0963">Cytoplasm</keyword>
<keyword id="KW-1015">Disulfide bond</keyword>
<keyword id="KW-0547">Nucleotide-binding</keyword>
<keyword id="KW-0694">RNA-binding</keyword>
<keyword id="KW-0808">Transferase</keyword>
<keyword id="KW-0819">tRNA processing</keyword>
<keyword id="KW-0820">tRNA-binding</keyword>
<protein>
    <recommendedName>
        <fullName evidence="1">tRNA-specific 2-thiouridylase MnmA 1</fullName>
        <ecNumber evidence="1">2.8.1.13</ecNumber>
    </recommendedName>
</protein>
<accession>A7GCM3</accession>
<feature type="chain" id="PRO_0000349590" description="tRNA-specific 2-thiouridylase MnmA 1">
    <location>
        <begin position="1"/>
        <end position="356"/>
    </location>
</feature>
<feature type="region of interest" description="Interaction with tRNA" evidence="1">
    <location>
        <begin position="149"/>
        <end position="151"/>
    </location>
</feature>
<feature type="region of interest" description="Interaction with tRNA" evidence="1">
    <location>
        <begin position="305"/>
        <end position="306"/>
    </location>
</feature>
<feature type="active site" description="Nucleophile" evidence="1">
    <location>
        <position position="103"/>
    </location>
</feature>
<feature type="active site" description="Cysteine persulfide intermediate" evidence="1">
    <location>
        <position position="199"/>
    </location>
</feature>
<feature type="binding site" evidence="1">
    <location>
        <begin position="8"/>
        <end position="15"/>
    </location>
    <ligand>
        <name>ATP</name>
        <dbReference type="ChEBI" id="CHEBI:30616"/>
    </ligand>
</feature>
<feature type="binding site" evidence="1">
    <location>
        <position position="34"/>
    </location>
    <ligand>
        <name>ATP</name>
        <dbReference type="ChEBI" id="CHEBI:30616"/>
    </ligand>
</feature>
<feature type="binding site" evidence="1">
    <location>
        <position position="127"/>
    </location>
    <ligand>
        <name>ATP</name>
        <dbReference type="ChEBI" id="CHEBI:30616"/>
    </ligand>
</feature>
<feature type="site" description="Interaction with tRNA" evidence="1">
    <location>
        <position position="128"/>
    </location>
</feature>
<feature type="site" description="Interaction with tRNA" evidence="1">
    <location>
        <position position="338"/>
    </location>
</feature>
<feature type="disulfide bond" description="Alternate" evidence="1">
    <location>
        <begin position="103"/>
        <end position="199"/>
    </location>
</feature>
<sequence length="356" mass="40586">MKKKVLVGMSGGVDSSVAAYLLKEQGYEVIGVTMQIWQDDEEFIEKEGGCCSLSAVADARRVANKIGIPFYVMNFKDAFKRNVIDYFVDEYMEGRTPNPCIACNKFIKFSSFLDKAMAMGIDYVATGHYAIIEKHNDRYIIKKSEDDKKDQTYALYNLTQFQLERTLMPCGQYKKSKIREIAKEIGLRVHNKKDSEEICFIPDNDHGRYIKNRFPNKVREGNFVDKQGSILGTHKGIVYYTIGQRKGLGIAFGKPMYVVDINPFRNEVVLGDLEDLLNTELIAKDTNYIPFDTLKEPMEVEAKIRYSQTPSKAIITPIEDGRVRVNFHEKQRAITKGQSVVFYKDDLLIGGGIIEK</sequence>
<proteinExistence type="inferred from homology"/>
<reference key="1">
    <citation type="submission" date="2007-06" db="EMBL/GenBank/DDBJ databases">
        <authorList>
            <person name="Brinkac L.M."/>
            <person name="Daugherty S."/>
            <person name="Dodson R.J."/>
            <person name="Madupu R."/>
            <person name="Brown J.L."/>
            <person name="Bruce D."/>
            <person name="Detter C."/>
            <person name="Munk C."/>
            <person name="Smith L.A."/>
            <person name="Smith T.J."/>
            <person name="White O."/>
            <person name="Brettin T.S."/>
        </authorList>
    </citation>
    <scope>NUCLEOTIDE SEQUENCE [LARGE SCALE GENOMIC DNA]</scope>
    <source>
        <strain>Langeland / NCTC 10281 / Type F</strain>
    </source>
</reference>
<gene>
    <name evidence="1" type="primary">mnmA1</name>
    <name type="ordered locus">CLI_1267</name>
</gene>
<organism>
    <name type="scientific">Clostridium botulinum (strain Langeland / NCTC 10281 / Type F)</name>
    <dbReference type="NCBI Taxonomy" id="441772"/>
    <lineage>
        <taxon>Bacteria</taxon>
        <taxon>Bacillati</taxon>
        <taxon>Bacillota</taxon>
        <taxon>Clostridia</taxon>
        <taxon>Eubacteriales</taxon>
        <taxon>Clostridiaceae</taxon>
        <taxon>Clostridium</taxon>
    </lineage>
</organism>
<name>MNMA1_CLOBL</name>
<dbReference type="EC" id="2.8.1.13" evidence="1"/>
<dbReference type="EMBL" id="CP000728">
    <property type="protein sequence ID" value="ABS40009.1"/>
    <property type="molecule type" value="Genomic_DNA"/>
</dbReference>
<dbReference type="RefSeq" id="WP_011988058.1">
    <property type="nucleotide sequence ID" value="NC_009699.1"/>
</dbReference>
<dbReference type="SMR" id="A7GCM3"/>
<dbReference type="KEGG" id="cbf:CLI_1267"/>
<dbReference type="HOGENOM" id="CLU_035188_0_0_9"/>
<dbReference type="Proteomes" id="UP000002410">
    <property type="component" value="Chromosome"/>
</dbReference>
<dbReference type="GO" id="GO:0005737">
    <property type="term" value="C:cytoplasm"/>
    <property type="evidence" value="ECO:0007669"/>
    <property type="project" value="UniProtKB-SubCell"/>
</dbReference>
<dbReference type="GO" id="GO:0005524">
    <property type="term" value="F:ATP binding"/>
    <property type="evidence" value="ECO:0007669"/>
    <property type="project" value="UniProtKB-KW"/>
</dbReference>
<dbReference type="GO" id="GO:0000049">
    <property type="term" value="F:tRNA binding"/>
    <property type="evidence" value="ECO:0007669"/>
    <property type="project" value="UniProtKB-KW"/>
</dbReference>
<dbReference type="GO" id="GO:0103016">
    <property type="term" value="F:tRNA-uridine 2-sulfurtransferase activity"/>
    <property type="evidence" value="ECO:0007669"/>
    <property type="project" value="UniProtKB-EC"/>
</dbReference>
<dbReference type="GO" id="GO:0002143">
    <property type="term" value="P:tRNA wobble position uridine thiolation"/>
    <property type="evidence" value="ECO:0007669"/>
    <property type="project" value="TreeGrafter"/>
</dbReference>
<dbReference type="CDD" id="cd01998">
    <property type="entry name" value="MnmA_TRMU-like"/>
    <property type="match status" value="1"/>
</dbReference>
<dbReference type="FunFam" id="2.30.30.280:FF:000001">
    <property type="entry name" value="tRNA-specific 2-thiouridylase MnmA"/>
    <property type="match status" value="1"/>
</dbReference>
<dbReference type="FunFam" id="2.40.30.10:FF:000023">
    <property type="entry name" value="tRNA-specific 2-thiouridylase MnmA"/>
    <property type="match status" value="1"/>
</dbReference>
<dbReference type="FunFam" id="3.40.50.620:FF:000115">
    <property type="entry name" value="tRNA-specific 2-thiouridylase MnmA"/>
    <property type="match status" value="1"/>
</dbReference>
<dbReference type="Gene3D" id="2.30.30.280">
    <property type="entry name" value="Adenine nucleotide alpha hydrolases-like domains"/>
    <property type="match status" value="1"/>
</dbReference>
<dbReference type="Gene3D" id="3.40.50.620">
    <property type="entry name" value="HUPs"/>
    <property type="match status" value="1"/>
</dbReference>
<dbReference type="Gene3D" id="2.40.30.10">
    <property type="entry name" value="Translation factors"/>
    <property type="match status" value="1"/>
</dbReference>
<dbReference type="HAMAP" id="MF_00144">
    <property type="entry name" value="tRNA_thiouridyl_MnmA"/>
    <property type="match status" value="1"/>
</dbReference>
<dbReference type="InterPro" id="IPR004506">
    <property type="entry name" value="MnmA-like"/>
</dbReference>
<dbReference type="InterPro" id="IPR046885">
    <property type="entry name" value="MnmA-like_C"/>
</dbReference>
<dbReference type="InterPro" id="IPR046884">
    <property type="entry name" value="MnmA-like_central"/>
</dbReference>
<dbReference type="InterPro" id="IPR023382">
    <property type="entry name" value="MnmA-like_central_sf"/>
</dbReference>
<dbReference type="InterPro" id="IPR014729">
    <property type="entry name" value="Rossmann-like_a/b/a_fold"/>
</dbReference>
<dbReference type="NCBIfam" id="NF001138">
    <property type="entry name" value="PRK00143.1"/>
    <property type="match status" value="1"/>
</dbReference>
<dbReference type="NCBIfam" id="TIGR00420">
    <property type="entry name" value="trmU"/>
    <property type="match status" value="1"/>
</dbReference>
<dbReference type="PANTHER" id="PTHR11933:SF5">
    <property type="entry name" value="MITOCHONDRIAL TRNA-SPECIFIC 2-THIOURIDYLASE 1"/>
    <property type="match status" value="1"/>
</dbReference>
<dbReference type="PANTHER" id="PTHR11933">
    <property type="entry name" value="TRNA 5-METHYLAMINOMETHYL-2-THIOURIDYLATE -METHYLTRANSFERASE"/>
    <property type="match status" value="1"/>
</dbReference>
<dbReference type="Pfam" id="PF03054">
    <property type="entry name" value="tRNA_Me_trans"/>
    <property type="match status" value="1"/>
</dbReference>
<dbReference type="Pfam" id="PF20258">
    <property type="entry name" value="tRNA_Me_trans_C"/>
    <property type="match status" value="1"/>
</dbReference>
<dbReference type="Pfam" id="PF20259">
    <property type="entry name" value="tRNA_Me_trans_M"/>
    <property type="match status" value="1"/>
</dbReference>
<dbReference type="SUPFAM" id="SSF52402">
    <property type="entry name" value="Adenine nucleotide alpha hydrolases-like"/>
    <property type="match status" value="1"/>
</dbReference>
<comment type="function">
    <text evidence="1">Catalyzes the 2-thiolation of uridine at the wobble position (U34) of tRNA, leading to the formation of s(2)U34.</text>
</comment>
<comment type="catalytic activity">
    <reaction evidence="1">
        <text>S-sulfanyl-L-cysteinyl-[protein] + uridine(34) in tRNA + AH2 + ATP = 2-thiouridine(34) in tRNA + L-cysteinyl-[protein] + A + AMP + diphosphate + H(+)</text>
        <dbReference type="Rhea" id="RHEA:47032"/>
        <dbReference type="Rhea" id="RHEA-COMP:10131"/>
        <dbReference type="Rhea" id="RHEA-COMP:11726"/>
        <dbReference type="Rhea" id="RHEA-COMP:11727"/>
        <dbReference type="Rhea" id="RHEA-COMP:11728"/>
        <dbReference type="ChEBI" id="CHEBI:13193"/>
        <dbReference type="ChEBI" id="CHEBI:15378"/>
        <dbReference type="ChEBI" id="CHEBI:17499"/>
        <dbReference type="ChEBI" id="CHEBI:29950"/>
        <dbReference type="ChEBI" id="CHEBI:30616"/>
        <dbReference type="ChEBI" id="CHEBI:33019"/>
        <dbReference type="ChEBI" id="CHEBI:61963"/>
        <dbReference type="ChEBI" id="CHEBI:65315"/>
        <dbReference type="ChEBI" id="CHEBI:87170"/>
        <dbReference type="ChEBI" id="CHEBI:456215"/>
        <dbReference type="EC" id="2.8.1.13"/>
    </reaction>
</comment>
<comment type="subcellular location">
    <subcellularLocation>
        <location evidence="1">Cytoplasm</location>
    </subcellularLocation>
</comment>
<comment type="similarity">
    <text evidence="1">Belongs to the MnmA/TRMU family.</text>
</comment>
<evidence type="ECO:0000255" key="1">
    <source>
        <dbReference type="HAMAP-Rule" id="MF_00144"/>
    </source>
</evidence>